<gene>
    <name type="ordered locus">Ent638_3367</name>
</gene>
<sequence length="90" mass="10695">MARTIFCTYLQRDAEGQDFQLYPGDLGKRIFNEISKEAWAQWQQKQTMLINEKKLTMMNPDHRKLLEAEMVNFLFEGKEVHIEGYTPPEK</sequence>
<accession>A4WE99</accession>
<reference key="1">
    <citation type="journal article" date="2010" name="PLoS Genet.">
        <title>Genome sequence of the plant growth promoting endophytic bacterium Enterobacter sp. 638.</title>
        <authorList>
            <person name="Taghavi S."/>
            <person name="van der Lelie D."/>
            <person name="Hoffman A."/>
            <person name="Zhang Y.B."/>
            <person name="Walla M.D."/>
            <person name="Vangronsveld J."/>
            <person name="Newman L."/>
            <person name="Monchy S."/>
        </authorList>
    </citation>
    <scope>NUCLEOTIDE SEQUENCE [LARGE SCALE GENOMIC DNA]</scope>
    <source>
        <strain>638</strain>
    </source>
</reference>
<protein>
    <recommendedName>
        <fullName evidence="1">Probable Fe(2+)-trafficking protein</fullName>
    </recommendedName>
</protein>
<organism>
    <name type="scientific">Enterobacter sp. (strain 638)</name>
    <dbReference type="NCBI Taxonomy" id="399742"/>
    <lineage>
        <taxon>Bacteria</taxon>
        <taxon>Pseudomonadati</taxon>
        <taxon>Pseudomonadota</taxon>
        <taxon>Gammaproteobacteria</taxon>
        <taxon>Enterobacterales</taxon>
        <taxon>Enterobacteriaceae</taxon>
        <taxon>Enterobacter</taxon>
    </lineage>
</organism>
<dbReference type="EMBL" id="CP000653">
    <property type="protein sequence ID" value="ABP62029.1"/>
    <property type="molecule type" value="Genomic_DNA"/>
</dbReference>
<dbReference type="RefSeq" id="WP_015960357.1">
    <property type="nucleotide sequence ID" value="NC_009436.1"/>
</dbReference>
<dbReference type="SMR" id="A4WE99"/>
<dbReference type="STRING" id="399742.Ent638_3367"/>
<dbReference type="KEGG" id="ent:Ent638_3367"/>
<dbReference type="eggNOG" id="COG2924">
    <property type="taxonomic scope" value="Bacteria"/>
</dbReference>
<dbReference type="HOGENOM" id="CLU_170994_0_0_6"/>
<dbReference type="OrthoDB" id="9804318at2"/>
<dbReference type="Proteomes" id="UP000000230">
    <property type="component" value="Chromosome"/>
</dbReference>
<dbReference type="GO" id="GO:0005829">
    <property type="term" value="C:cytosol"/>
    <property type="evidence" value="ECO:0007669"/>
    <property type="project" value="TreeGrafter"/>
</dbReference>
<dbReference type="GO" id="GO:0005506">
    <property type="term" value="F:iron ion binding"/>
    <property type="evidence" value="ECO:0007669"/>
    <property type="project" value="UniProtKB-UniRule"/>
</dbReference>
<dbReference type="GO" id="GO:0034599">
    <property type="term" value="P:cellular response to oxidative stress"/>
    <property type="evidence" value="ECO:0007669"/>
    <property type="project" value="TreeGrafter"/>
</dbReference>
<dbReference type="FunFam" id="1.10.3880.10:FF:000001">
    <property type="entry name" value="Probable Fe(2+)-trafficking protein"/>
    <property type="match status" value="1"/>
</dbReference>
<dbReference type="Gene3D" id="1.10.3880.10">
    <property type="entry name" value="Fe(II) trafficking protein YggX"/>
    <property type="match status" value="1"/>
</dbReference>
<dbReference type="HAMAP" id="MF_00686">
    <property type="entry name" value="Fe_traffic_YggX"/>
    <property type="match status" value="1"/>
</dbReference>
<dbReference type="InterPro" id="IPR007457">
    <property type="entry name" value="Fe_traffick_prot_YggX"/>
</dbReference>
<dbReference type="InterPro" id="IPR036766">
    <property type="entry name" value="Fe_traffick_prot_YggX_sf"/>
</dbReference>
<dbReference type="NCBIfam" id="NF003817">
    <property type="entry name" value="PRK05408.1"/>
    <property type="match status" value="1"/>
</dbReference>
<dbReference type="PANTHER" id="PTHR36965">
    <property type="entry name" value="FE(2+)-TRAFFICKING PROTEIN-RELATED"/>
    <property type="match status" value="1"/>
</dbReference>
<dbReference type="PANTHER" id="PTHR36965:SF1">
    <property type="entry name" value="FE(2+)-TRAFFICKING PROTEIN-RELATED"/>
    <property type="match status" value="1"/>
</dbReference>
<dbReference type="Pfam" id="PF04362">
    <property type="entry name" value="Iron_traffic"/>
    <property type="match status" value="1"/>
</dbReference>
<dbReference type="PIRSF" id="PIRSF029827">
    <property type="entry name" value="Fe_traffic_YggX"/>
    <property type="match status" value="1"/>
</dbReference>
<dbReference type="SUPFAM" id="SSF111148">
    <property type="entry name" value="YggX-like"/>
    <property type="match status" value="1"/>
</dbReference>
<keyword id="KW-0408">Iron</keyword>
<feature type="chain" id="PRO_1000061996" description="Probable Fe(2+)-trafficking protein">
    <location>
        <begin position="1"/>
        <end position="90"/>
    </location>
</feature>
<proteinExistence type="inferred from homology"/>
<name>FETP_ENT38</name>
<comment type="function">
    <text evidence="1">Could be a mediator in iron transactions between iron acquisition and iron-requiring processes, such as synthesis and/or repair of Fe-S clusters in biosynthetic enzymes.</text>
</comment>
<comment type="subunit">
    <text evidence="1">Monomer.</text>
</comment>
<comment type="similarity">
    <text evidence="1">Belongs to the Fe(2+)-trafficking protein family.</text>
</comment>
<evidence type="ECO:0000255" key="1">
    <source>
        <dbReference type="HAMAP-Rule" id="MF_00686"/>
    </source>
</evidence>